<protein>
    <recommendedName>
        <fullName evidence="1">Fructose-1,6-bisphosphatase class 1</fullName>
        <shortName evidence="1">FBPase class 1</shortName>
        <ecNumber evidence="1">3.1.3.11</ecNumber>
    </recommendedName>
    <alternativeName>
        <fullName evidence="1">D-fructose-1,6-bisphosphate 1-phosphohydrolase class 1</fullName>
    </alternativeName>
</protein>
<evidence type="ECO:0000255" key="1">
    <source>
        <dbReference type="HAMAP-Rule" id="MF_01855"/>
    </source>
</evidence>
<gene>
    <name evidence="1" type="primary">fbp</name>
    <name type="ordered locus">NMCC_0976</name>
</gene>
<reference key="1">
    <citation type="journal article" date="2008" name="Genomics">
        <title>Characterization of ST-4821 complex, a unique Neisseria meningitidis clone.</title>
        <authorList>
            <person name="Peng J."/>
            <person name="Yang L."/>
            <person name="Yang F."/>
            <person name="Yang J."/>
            <person name="Yan Y."/>
            <person name="Nie H."/>
            <person name="Zhang X."/>
            <person name="Xiong Z."/>
            <person name="Jiang Y."/>
            <person name="Cheng F."/>
            <person name="Xu X."/>
            <person name="Chen S."/>
            <person name="Sun L."/>
            <person name="Li W."/>
            <person name="Shen Y."/>
            <person name="Shao Z."/>
            <person name="Liang X."/>
            <person name="Xu J."/>
            <person name="Jin Q."/>
        </authorList>
    </citation>
    <scope>NUCLEOTIDE SEQUENCE [LARGE SCALE GENOMIC DNA]</scope>
    <source>
        <strain>053442</strain>
    </source>
</reference>
<comment type="catalytic activity">
    <reaction evidence="1">
        <text>beta-D-fructose 1,6-bisphosphate + H2O = beta-D-fructose 6-phosphate + phosphate</text>
        <dbReference type="Rhea" id="RHEA:11064"/>
        <dbReference type="ChEBI" id="CHEBI:15377"/>
        <dbReference type="ChEBI" id="CHEBI:32966"/>
        <dbReference type="ChEBI" id="CHEBI:43474"/>
        <dbReference type="ChEBI" id="CHEBI:57634"/>
        <dbReference type="EC" id="3.1.3.11"/>
    </reaction>
</comment>
<comment type="cofactor">
    <cofactor evidence="1">
        <name>Mg(2+)</name>
        <dbReference type="ChEBI" id="CHEBI:18420"/>
    </cofactor>
    <text evidence="1">Binds 2 magnesium ions per subunit.</text>
</comment>
<comment type="pathway">
    <text evidence="1">Carbohydrate biosynthesis; gluconeogenesis.</text>
</comment>
<comment type="subunit">
    <text evidence="1">Homotetramer.</text>
</comment>
<comment type="subcellular location">
    <subcellularLocation>
        <location evidence="1">Cytoplasm</location>
    </subcellularLocation>
</comment>
<comment type="similarity">
    <text evidence="1">Belongs to the FBPase class 1 family.</text>
</comment>
<feature type="chain" id="PRO_0000364609" description="Fructose-1,6-bisphosphatase class 1">
    <location>
        <begin position="1"/>
        <end position="324"/>
    </location>
</feature>
<feature type="binding site" evidence="1">
    <location>
        <position position="88"/>
    </location>
    <ligand>
        <name>Mg(2+)</name>
        <dbReference type="ChEBI" id="CHEBI:18420"/>
        <label>1</label>
    </ligand>
</feature>
<feature type="binding site" evidence="1">
    <location>
        <position position="107"/>
    </location>
    <ligand>
        <name>Mg(2+)</name>
        <dbReference type="ChEBI" id="CHEBI:18420"/>
        <label>1</label>
    </ligand>
</feature>
<feature type="binding site" evidence="1">
    <location>
        <position position="107"/>
    </location>
    <ligand>
        <name>Mg(2+)</name>
        <dbReference type="ChEBI" id="CHEBI:18420"/>
        <label>2</label>
    </ligand>
</feature>
<feature type="binding site" evidence="1">
    <location>
        <position position="109"/>
    </location>
    <ligand>
        <name>Mg(2+)</name>
        <dbReference type="ChEBI" id="CHEBI:18420"/>
        <label>1</label>
    </ligand>
</feature>
<feature type="binding site" evidence="1">
    <location>
        <begin position="110"/>
        <end position="113"/>
    </location>
    <ligand>
        <name>substrate</name>
    </ligand>
</feature>
<feature type="binding site" evidence="1">
    <location>
        <position position="110"/>
    </location>
    <ligand>
        <name>Mg(2+)</name>
        <dbReference type="ChEBI" id="CHEBI:18420"/>
        <label>2</label>
    </ligand>
</feature>
<feature type="binding site" evidence="1">
    <location>
        <position position="199"/>
    </location>
    <ligand>
        <name>substrate</name>
    </ligand>
</feature>
<feature type="binding site" evidence="1">
    <location>
        <position position="265"/>
    </location>
    <ligand>
        <name>substrate</name>
    </ligand>
</feature>
<feature type="binding site" evidence="1">
    <location>
        <position position="271"/>
    </location>
    <ligand>
        <name>Mg(2+)</name>
        <dbReference type="ChEBI" id="CHEBI:18420"/>
        <label>2</label>
    </ligand>
</feature>
<sequence>MDTLTRFLPEHLQQNQLPEALGGVLLSVVSACTEINAKVRLGALAGVLGMTGTGNIQGEDQKKLDVIANNIMIDTLKANPAVAGLASEEEDTFVSAGENGRYLVLFDPLDGSSNIDVNISVGTIFSILEKPEGALATESFLQTGRQQLAAGYVLYGPQTQLVFTFGHGVYMFTLNAENEFVLTKEKPKVPESTKEFAINMSNRRHWLPPVQQYIDELLAGETGTRGKNYNMRWVASMVAEIHRILMRGGVFMYPQDKRDPAKPGKLRLMYEANPMSLILEQAGASASNAYQAMLDIQPENLHQRVAVFMGSSEEVDYLNRLHSK</sequence>
<organism>
    <name type="scientific">Neisseria meningitidis serogroup C (strain 053442)</name>
    <dbReference type="NCBI Taxonomy" id="374833"/>
    <lineage>
        <taxon>Bacteria</taxon>
        <taxon>Pseudomonadati</taxon>
        <taxon>Pseudomonadota</taxon>
        <taxon>Betaproteobacteria</taxon>
        <taxon>Neisseriales</taxon>
        <taxon>Neisseriaceae</taxon>
        <taxon>Neisseria</taxon>
    </lineage>
</organism>
<name>F16PA_NEIM0</name>
<accession>A9LYX9</accession>
<keyword id="KW-0119">Carbohydrate metabolism</keyword>
<keyword id="KW-0963">Cytoplasm</keyword>
<keyword id="KW-0378">Hydrolase</keyword>
<keyword id="KW-0460">Magnesium</keyword>
<keyword id="KW-0479">Metal-binding</keyword>
<proteinExistence type="inferred from homology"/>
<dbReference type="EC" id="3.1.3.11" evidence="1"/>
<dbReference type="EMBL" id="CP000381">
    <property type="protein sequence ID" value="ABX73156.1"/>
    <property type="molecule type" value="Genomic_DNA"/>
</dbReference>
<dbReference type="RefSeq" id="WP_012221596.1">
    <property type="nucleotide sequence ID" value="NC_010120.1"/>
</dbReference>
<dbReference type="SMR" id="A9LYX9"/>
<dbReference type="KEGG" id="nmn:NMCC_0976"/>
<dbReference type="HOGENOM" id="CLU_039977_0_0_4"/>
<dbReference type="UniPathway" id="UPA00138"/>
<dbReference type="Proteomes" id="UP000001177">
    <property type="component" value="Chromosome"/>
</dbReference>
<dbReference type="GO" id="GO:0005829">
    <property type="term" value="C:cytosol"/>
    <property type="evidence" value="ECO:0007669"/>
    <property type="project" value="TreeGrafter"/>
</dbReference>
<dbReference type="GO" id="GO:0042132">
    <property type="term" value="F:fructose 1,6-bisphosphate 1-phosphatase activity"/>
    <property type="evidence" value="ECO:0007669"/>
    <property type="project" value="UniProtKB-UniRule"/>
</dbReference>
<dbReference type="GO" id="GO:0000287">
    <property type="term" value="F:magnesium ion binding"/>
    <property type="evidence" value="ECO:0007669"/>
    <property type="project" value="UniProtKB-UniRule"/>
</dbReference>
<dbReference type="GO" id="GO:0030388">
    <property type="term" value="P:fructose 1,6-bisphosphate metabolic process"/>
    <property type="evidence" value="ECO:0007669"/>
    <property type="project" value="TreeGrafter"/>
</dbReference>
<dbReference type="GO" id="GO:0006002">
    <property type="term" value="P:fructose 6-phosphate metabolic process"/>
    <property type="evidence" value="ECO:0007669"/>
    <property type="project" value="TreeGrafter"/>
</dbReference>
<dbReference type="GO" id="GO:0006000">
    <property type="term" value="P:fructose metabolic process"/>
    <property type="evidence" value="ECO:0007669"/>
    <property type="project" value="TreeGrafter"/>
</dbReference>
<dbReference type="GO" id="GO:0006094">
    <property type="term" value="P:gluconeogenesis"/>
    <property type="evidence" value="ECO:0007669"/>
    <property type="project" value="UniProtKB-UniRule"/>
</dbReference>
<dbReference type="GO" id="GO:0005986">
    <property type="term" value="P:sucrose biosynthetic process"/>
    <property type="evidence" value="ECO:0007669"/>
    <property type="project" value="TreeGrafter"/>
</dbReference>
<dbReference type="CDD" id="cd00354">
    <property type="entry name" value="FBPase"/>
    <property type="match status" value="1"/>
</dbReference>
<dbReference type="FunFam" id="3.30.540.10:FF:000006">
    <property type="entry name" value="Fructose-1,6-bisphosphatase class 1"/>
    <property type="match status" value="1"/>
</dbReference>
<dbReference type="FunFam" id="3.40.190.80:FF:000011">
    <property type="entry name" value="Fructose-1,6-bisphosphatase class 1"/>
    <property type="match status" value="1"/>
</dbReference>
<dbReference type="Gene3D" id="3.40.190.80">
    <property type="match status" value="1"/>
</dbReference>
<dbReference type="Gene3D" id="3.30.540.10">
    <property type="entry name" value="Fructose-1,6-Bisphosphatase, subunit A, domain 1"/>
    <property type="match status" value="1"/>
</dbReference>
<dbReference type="HAMAP" id="MF_01855">
    <property type="entry name" value="FBPase_class1"/>
    <property type="match status" value="1"/>
</dbReference>
<dbReference type="InterPro" id="IPR044015">
    <property type="entry name" value="FBPase_C_dom"/>
</dbReference>
<dbReference type="InterPro" id="IPR000146">
    <property type="entry name" value="FBPase_class-1"/>
</dbReference>
<dbReference type="InterPro" id="IPR033391">
    <property type="entry name" value="FBPase_N"/>
</dbReference>
<dbReference type="InterPro" id="IPR028343">
    <property type="entry name" value="FBPtase"/>
</dbReference>
<dbReference type="NCBIfam" id="NF006779">
    <property type="entry name" value="PRK09293.1-3"/>
    <property type="match status" value="1"/>
</dbReference>
<dbReference type="NCBIfam" id="NF006780">
    <property type="entry name" value="PRK09293.1-4"/>
    <property type="match status" value="1"/>
</dbReference>
<dbReference type="PANTHER" id="PTHR11556">
    <property type="entry name" value="FRUCTOSE-1,6-BISPHOSPHATASE-RELATED"/>
    <property type="match status" value="1"/>
</dbReference>
<dbReference type="PANTHER" id="PTHR11556:SF35">
    <property type="entry name" value="SEDOHEPTULOSE-1,7-BISPHOSPHATASE, CHLOROPLASTIC"/>
    <property type="match status" value="1"/>
</dbReference>
<dbReference type="Pfam" id="PF00316">
    <property type="entry name" value="FBPase"/>
    <property type="match status" value="1"/>
</dbReference>
<dbReference type="Pfam" id="PF18913">
    <property type="entry name" value="FBPase_C"/>
    <property type="match status" value="1"/>
</dbReference>
<dbReference type="PIRSF" id="PIRSF500210">
    <property type="entry name" value="FBPtase"/>
    <property type="match status" value="1"/>
</dbReference>
<dbReference type="PIRSF" id="PIRSF000904">
    <property type="entry name" value="FBPtase_SBPase"/>
    <property type="match status" value="1"/>
</dbReference>
<dbReference type="PRINTS" id="PR00115">
    <property type="entry name" value="F16BPHPHTASE"/>
</dbReference>
<dbReference type="SUPFAM" id="SSF56655">
    <property type="entry name" value="Carbohydrate phosphatase"/>
    <property type="match status" value="1"/>
</dbReference>